<keyword id="KW-0002">3D-structure</keyword>
<keyword id="KW-1015">Disulfide bond</keyword>
<keyword id="KW-0325">Glycoprotein</keyword>
<keyword id="KW-0393">Immunoglobulin domain</keyword>
<keyword id="KW-1185">Reference proteome</keyword>
<keyword id="KW-0732">Signal</keyword>
<protein>
    <recommendedName>
        <fullName evidence="4">Cell adhesion molecule CEACAM15</fullName>
    </recommendedName>
    <alternativeName>
        <fullName>Carcinoembryonic antigen-related cell adhesion molecule 15</fullName>
        <shortName evidence="7">CEA cell adhesion molecule 15</shortName>
    </alternativeName>
</protein>
<dbReference type="EMBL" id="AC150681">
    <property type="status" value="NOT_ANNOTATED_CDS"/>
    <property type="molecule type" value="Genomic_DNA"/>
</dbReference>
<dbReference type="EMBL" id="CH466654">
    <property type="protein sequence ID" value="EDL42087.1"/>
    <property type="molecule type" value="Genomic_DNA"/>
</dbReference>
<dbReference type="EMBL" id="BC125404">
    <property type="protein sequence ID" value="AAI25405.1"/>
    <property type="status" value="ALT_INIT"/>
    <property type="molecule type" value="mRNA"/>
</dbReference>
<dbReference type="EMBL" id="BC125406">
    <property type="protein sequence ID" value="AAI25407.1"/>
    <property type="status" value="ALT_INIT"/>
    <property type="molecule type" value="mRNA"/>
</dbReference>
<dbReference type="CCDS" id="CCDS52041.1"/>
<dbReference type="RefSeq" id="NP_780524.1">
    <property type="nucleotide sequence ID" value="NM_175315.1"/>
</dbReference>
<dbReference type="PDB" id="4JGJ">
    <property type="method" value="X-ray"/>
    <property type="resolution" value="2.65 A"/>
    <property type="chains" value="A/B=31-145"/>
</dbReference>
<dbReference type="PDBsum" id="4JGJ"/>
<dbReference type="SMR" id="A0A0B4J1L0"/>
<dbReference type="FunCoup" id="A0A0B4J1L0">
    <property type="interactions" value="2"/>
</dbReference>
<dbReference type="STRING" id="10090.ENSMUSP00000104138"/>
<dbReference type="GlyCosmos" id="A0A0B4J1L0">
    <property type="glycosylation" value="4 sites, No reported glycans"/>
</dbReference>
<dbReference type="GlyGen" id="A0A0B4J1L0">
    <property type="glycosylation" value="4 sites"/>
</dbReference>
<dbReference type="iPTMnet" id="A0A0B4J1L0"/>
<dbReference type="PhosphoSitePlus" id="A0A0B4J1L0"/>
<dbReference type="PaxDb" id="10090-ENSMUSP00000104138"/>
<dbReference type="Ensembl" id="ENSMUST00000108498.3">
    <property type="protein sequence ID" value="ENSMUSP00000104138.3"/>
    <property type="gene ID" value="ENSMUSG00000078795.3"/>
</dbReference>
<dbReference type="GeneID" id="101434"/>
<dbReference type="KEGG" id="mmu:101434"/>
<dbReference type="UCSC" id="uc009fhy.2">
    <property type="organism name" value="mouse"/>
</dbReference>
<dbReference type="AGR" id="MGI:2141810"/>
<dbReference type="CTD" id="101434"/>
<dbReference type="MGI" id="MGI:2141810">
    <property type="gene designation" value="Ceacam15"/>
</dbReference>
<dbReference type="VEuPathDB" id="HostDB:ENSMUSG00000078795"/>
<dbReference type="eggNOG" id="ENOG502T1YP">
    <property type="taxonomic scope" value="Eukaryota"/>
</dbReference>
<dbReference type="GeneTree" id="ENSGT01100000263479"/>
<dbReference type="HOGENOM" id="CLU_024555_4_1_1"/>
<dbReference type="InParanoid" id="A0A0B4J1L0"/>
<dbReference type="OMA" id="WFFNYKP"/>
<dbReference type="OrthoDB" id="6353782at2759"/>
<dbReference type="PhylomeDB" id="A0A0B4J1L0"/>
<dbReference type="BioGRID-ORCS" id="101434">
    <property type="hits" value="3 hits in 76 CRISPR screens"/>
</dbReference>
<dbReference type="EvolutionaryTrace" id="A0A0B4J1L0"/>
<dbReference type="PRO" id="PR:A0A0B4J1L0"/>
<dbReference type="Proteomes" id="UP000000589">
    <property type="component" value="Chromosome 7"/>
</dbReference>
<dbReference type="RNAct" id="A0A0B4J1L0">
    <property type="molecule type" value="protein"/>
</dbReference>
<dbReference type="Bgee" id="ENSMUSG00000078795">
    <property type="expression patterns" value="Expressed in ectoplacental cone and 16 other cell types or tissues"/>
</dbReference>
<dbReference type="CDD" id="cd05741">
    <property type="entry name" value="IgV_CEACAM_like"/>
    <property type="match status" value="1"/>
</dbReference>
<dbReference type="FunFam" id="2.60.40.10:FF:000244">
    <property type="entry name" value="carcinoembryonic antigen-related cell adhesion molecule 16"/>
    <property type="match status" value="1"/>
</dbReference>
<dbReference type="Gene3D" id="2.60.40.10">
    <property type="entry name" value="Immunoglobulins"/>
    <property type="match status" value="2"/>
</dbReference>
<dbReference type="InterPro" id="IPR050831">
    <property type="entry name" value="CEA_cell_adhesion"/>
</dbReference>
<dbReference type="InterPro" id="IPR007110">
    <property type="entry name" value="Ig-like_dom"/>
</dbReference>
<dbReference type="InterPro" id="IPR036179">
    <property type="entry name" value="Ig-like_dom_sf"/>
</dbReference>
<dbReference type="InterPro" id="IPR013783">
    <property type="entry name" value="Ig-like_fold"/>
</dbReference>
<dbReference type="InterPro" id="IPR013098">
    <property type="entry name" value="Ig_I-set"/>
</dbReference>
<dbReference type="InterPro" id="IPR003599">
    <property type="entry name" value="Ig_sub"/>
</dbReference>
<dbReference type="InterPro" id="IPR003598">
    <property type="entry name" value="Ig_sub2"/>
</dbReference>
<dbReference type="InterPro" id="IPR013106">
    <property type="entry name" value="Ig_V-set"/>
</dbReference>
<dbReference type="PANTHER" id="PTHR44427:SF1">
    <property type="entry name" value="CARCINOEMBRYONIC ANTIGEN-RELATED CELL ADHESION MOLECULE 1"/>
    <property type="match status" value="1"/>
</dbReference>
<dbReference type="PANTHER" id="PTHR44427">
    <property type="entry name" value="CARCINOEMBRYONIC ANTIGEN-RELATED CELL ADHESION MOLECULE 19"/>
    <property type="match status" value="1"/>
</dbReference>
<dbReference type="Pfam" id="PF07679">
    <property type="entry name" value="I-set"/>
    <property type="match status" value="1"/>
</dbReference>
<dbReference type="Pfam" id="PF07686">
    <property type="entry name" value="V-set"/>
    <property type="match status" value="1"/>
</dbReference>
<dbReference type="SMART" id="SM00409">
    <property type="entry name" value="IG"/>
    <property type="match status" value="2"/>
</dbReference>
<dbReference type="SMART" id="SM00408">
    <property type="entry name" value="IGc2"/>
    <property type="match status" value="1"/>
</dbReference>
<dbReference type="SUPFAM" id="SSF48726">
    <property type="entry name" value="Immunoglobulin"/>
    <property type="match status" value="2"/>
</dbReference>
<dbReference type="PROSITE" id="PS50835">
    <property type="entry name" value="IG_LIKE"/>
    <property type="match status" value="1"/>
</dbReference>
<accession>A0A0B4J1L0</accession>
<accession>A0JLX4</accession>
<feature type="signal peptide" evidence="1">
    <location>
        <begin position="1"/>
        <end position="32"/>
    </location>
</feature>
<feature type="chain" id="PRO_0000442297" description="Cell adhesion molecule CEACAM15" evidence="1">
    <location>
        <begin position="33"/>
        <end position="234"/>
    </location>
</feature>
<feature type="domain" description="Ig-like C2-type" evidence="2">
    <location>
        <begin position="146"/>
        <end position="226"/>
    </location>
</feature>
<feature type="glycosylation site" description="N-linked (GlcNAc...) asparagine" evidence="1">
    <location>
        <position position="28"/>
    </location>
</feature>
<feature type="glycosylation site" description="N-linked (GlcNAc...) asparagine" evidence="1">
    <location>
        <position position="75"/>
    </location>
</feature>
<feature type="glycosylation site" description="N-linked (GlcNAc...) asparagine" evidence="1">
    <location>
        <position position="151"/>
    </location>
</feature>
<feature type="glycosylation site" description="N-linked (GlcNAc...) asparagine" evidence="1">
    <location>
        <position position="184"/>
    </location>
</feature>
<feature type="disulfide bond" evidence="2">
    <location>
        <begin position="165"/>
        <end position="213"/>
    </location>
</feature>
<feature type="strand" evidence="10">
    <location>
        <begin position="36"/>
        <end position="45"/>
    </location>
</feature>
<feature type="strand" evidence="10">
    <location>
        <begin position="50"/>
        <end position="52"/>
    </location>
</feature>
<feature type="strand" evidence="10">
    <location>
        <begin position="62"/>
        <end position="71"/>
    </location>
</feature>
<feature type="helix" evidence="10">
    <location>
        <begin position="74"/>
        <end position="76"/>
    </location>
</feature>
<feature type="strand" evidence="10">
    <location>
        <begin position="77"/>
        <end position="82"/>
    </location>
</feature>
<feature type="turn" evidence="10">
    <location>
        <begin position="83"/>
        <end position="86"/>
    </location>
</feature>
<feature type="strand" evidence="10">
    <location>
        <begin position="87"/>
        <end position="90"/>
    </location>
</feature>
<feature type="strand" evidence="10">
    <location>
        <begin position="98"/>
        <end position="100"/>
    </location>
</feature>
<feature type="strand" evidence="10">
    <location>
        <begin position="106"/>
        <end position="108"/>
    </location>
</feature>
<feature type="strand" evidence="10">
    <location>
        <begin position="117"/>
        <end position="124"/>
    </location>
</feature>
<feature type="strand" evidence="10">
    <location>
        <begin position="130"/>
        <end position="140"/>
    </location>
</feature>
<gene>
    <name evidence="7" type="primary">Ceacam15</name>
</gene>
<sequence length="234" mass="26408">MGAETMESPSLFLCKGLLLTASLLICWNWSTAALLTSKEMRFSAAEGAKVLLSVPDQEENLLSFSWYKGKDVNENFTIAHYKKSSDSLQLGKKVSGREEIYKDGSMMLRAITLEDTGFYTLQTFKAHGQQEVTHVHLQVYKIVTKPYLQLNHTRLKRKSASILTCVSPDTGVDINWFFNYKPLNATERITLSPEKRELTISPVWRADVGIYLCEVSNSFSSKKSYPLLMALAYG</sequence>
<name>CEA15_MOUSE</name>
<comment type="tissue specificity">
    <text evidence="3">Detected in placenta.</text>
</comment>
<comment type="similarity">
    <text evidence="4">Belongs to the immunoglobulin superfamily. CEA family.</text>
</comment>
<comment type="sequence caution" evidence="4">
    <conflict type="erroneous initiation">
        <sequence resource="EMBL-CDS" id="AAI25405"/>
    </conflict>
    <text>Truncated N-terminus.</text>
</comment>
<comment type="sequence caution" evidence="4">
    <conflict type="erroneous initiation">
        <sequence resource="EMBL-CDS" id="AAI25407"/>
    </conflict>
    <text>Truncated N-terminus.</text>
</comment>
<reference evidence="8" key="1">
    <citation type="journal article" date="2009" name="PLoS Biol.">
        <title>Lineage-specific biology revealed by a finished genome assembly of the mouse.</title>
        <authorList>
            <person name="Church D.M."/>
            <person name="Goodstadt L."/>
            <person name="Hillier L.W."/>
            <person name="Zody M.C."/>
            <person name="Goldstein S."/>
            <person name="She X."/>
            <person name="Bult C.J."/>
            <person name="Agarwala R."/>
            <person name="Cherry J.L."/>
            <person name="DiCuccio M."/>
            <person name="Hlavina W."/>
            <person name="Kapustin Y."/>
            <person name="Meric P."/>
            <person name="Maglott D."/>
            <person name="Birtle Z."/>
            <person name="Marques A.C."/>
            <person name="Graves T."/>
            <person name="Zhou S."/>
            <person name="Teague B."/>
            <person name="Potamousis K."/>
            <person name="Churas C."/>
            <person name="Place M."/>
            <person name="Herschleb J."/>
            <person name="Runnheim R."/>
            <person name="Forrest D."/>
            <person name="Amos-Landgraf J."/>
            <person name="Schwartz D.C."/>
            <person name="Cheng Z."/>
            <person name="Lindblad-Toh K."/>
            <person name="Eichler E.E."/>
            <person name="Ponting C.P."/>
        </authorList>
    </citation>
    <scope>NUCLEOTIDE SEQUENCE [LARGE SCALE GENOMIC DNA]</scope>
    <source>
        <strain evidence="8">C57BL/6J</strain>
    </source>
</reference>
<reference evidence="6" key="2">
    <citation type="submission" date="2005-09" db="EMBL/GenBank/DDBJ databases">
        <authorList>
            <person name="Mural R.J."/>
            <person name="Adams M.D."/>
            <person name="Myers E.W."/>
            <person name="Smith H.O."/>
            <person name="Venter J.C."/>
        </authorList>
    </citation>
    <scope>NUCLEOTIDE SEQUENCE [LARGE SCALE GENOMIC DNA]</scope>
</reference>
<reference key="3">
    <citation type="journal article" date="2004" name="Genome Res.">
        <title>The status, quality, and expansion of the NIH full-length cDNA project: the Mammalian Gene Collection (MGC).</title>
        <authorList>
            <consortium name="The MGC Project Team"/>
        </authorList>
    </citation>
    <scope>NUCLEOTIDE SEQUENCE [LARGE SCALE MRNA]</scope>
    <source>
        <tissue evidence="5">Brain</tissue>
    </source>
</reference>
<reference key="4">
    <citation type="journal article" date="2005" name="Genomics">
        <title>Identification of a novel group of evolutionarily conserved members within the rapidly diverging murine Cea family.</title>
        <authorList>
            <person name="Zebhauser R."/>
            <person name="Kammerer R."/>
            <person name="Eisenried A."/>
            <person name="McLellan A."/>
            <person name="Moore T."/>
            <person name="Zimmermann W."/>
        </authorList>
    </citation>
    <scope>IDENTIFICATION</scope>
    <scope>NOMENCLATURE</scope>
    <scope>TISSUE SPECIFICITY</scope>
</reference>
<reference evidence="9" key="5">
    <citation type="submission" date="2013-03" db="PDB data bank">
        <title>Crystal structure of the Ig-like D1 domain of CEACAM15 from Mus musculus [NYSGRC-005691].</title>
        <authorList>
            <person name="Kumar P.R."/>
            <person name="Bonanno J."/>
            <person name="Nathenson S.G."/>
            <person name="Almo S.C."/>
        </authorList>
    </citation>
    <scope>X-RAY CRYSTALLOGRAPHY (2.65 ANGSTROMS) OF 26-140</scope>
</reference>
<organism evidence="8">
    <name type="scientific">Mus musculus</name>
    <name type="common">Mouse</name>
    <dbReference type="NCBI Taxonomy" id="10090"/>
    <lineage>
        <taxon>Eukaryota</taxon>
        <taxon>Metazoa</taxon>
        <taxon>Chordata</taxon>
        <taxon>Craniata</taxon>
        <taxon>Vertebrata</taxon>
        <taxon>Euteleostomi</taxon>
        <taxon>Mammalia</taxon>
        <taxon>Eutheria</taxon>
        <taxon>Euarchontoglires</taxon>
        <taxon>Glires</taxon>
        <taxon>Rodentia</taxon>
        <taxon>Myomorpha</taxon>
        <taxon>Muroidea</taxon>
        <taxon>Muridae</taxon>
        <taxon>Murinae</taxon>
        <taxon>Mus</taxon>
        <taxon>Mus</taxon>
    </lineage>
</organism>
<proteinExistence type="evidence at protein level"/>
<evidence type="ECO:0000255" key="1"/>
<evidence type="ECO:0000255" key="2">
    <source>
        <dbReference type="PROSITE-ProRule" id="PRU00114"/>
    </source>
</evidence>
<evidence type="ECO:0000269" key="3">
    <source>
    </source>
</evidence>
<evidence type="ECO:0000305" key="4"/>
<evidence type="ECO:0000312" key="5">
    <source>
        <dbReference type="EMBL" id="AAI25405.1"/>
    </source>
</evidence>
<evidence type="ECO:0000312" key="6">
    <source>
        <dbReference type="EMBL" id="EDL42087.1"/>
    </source>
</evidence>
<evidence type="ECO:0000312" key="7">
    <source>
        <dbReference type="MGI" id="MGI:2141810"/>
    </source>
</evidence>
<evidence type="ECO:0000312" key="8">
    <source>
        <dbReference type="Proteomes" id="UP000000589"/>
    </source>
</evidence>
<evidence type="ECO:0007744" key="9">
    <source>
        <dbReference type="PDB" id="4JGJ"/>
    </source>
</evidence>
<evidence type="ECO:0007829" key="10">
    <source>
        <dbReference type="PDB" id="4JGJ"/>
    </source>
</evidence>